<feature type="chain" id="PRO_1000212174" description="Deoxyribose-phosphate aldolase">
    <location>
        <begin position="1"/>
        <end position="259"/>
    </location>
</feature>
<feature type="active site" description="Proton donor/acceptor" evidence="1">
    <location>
        <position position="102"/>
    </location>
</feature>
<feature type="active site" description="Schiff-base intermediate with acetaldehyde" evidence="1">
    <location>
        <position position="167"/>
    </location>
</feature>
<feature type="active site" description="Proton donor/acceptor" evidence="1">
    <location>
        <position position="201"/>
    </location>
</feature>
<name>DEOC_EDWI9</name>
<dbReference type="EC" id="4.1.2.4" evidence="1"/>
<dbReference type="EMBL" id="CP001600">
    <property type="protein sequence ID" value="ACR67791.1"/>
    <property type="molecule type" value="Genomic_DNA"/>
</dbReference>
<dbReference type="RefSeq" id="WP_015869991.1">
    <property type="nucleotide sequence ID" value="NZ_CP169062.1"/>
</dbReference>
<dbReference type="SMR" id="C5BHJ2"/>
<dbReference type="STRING" id="67780.B6E78_13515"/>
<dbReference type="GeneID" id="69537640"/>
<dbReference type="KEGG" id="eic:NT01EI_0562"/>
<dbReference type="PATRIC" id="fig|634503.3.peg.507"/>
<dbReference type="HOGENOM" id="CLU_053595_3_1_6"/>
<dbReference type="OrthoDB" id="6579831at2"/>
<dbReference type="UniPathway" id="UPA00002">
    <property type="reaction ID" value="UER00468"/>
</dbReference>
<dbReference type="Proteomes" id="UP000001485">
    <property type="component" value="Chromosome"/>
</dbReference>
<dbReference type="GO" id="GO:0005737">
    <property type="term" value="C:cytoplasm"/>
    <property type="evidence" value="ECO:0007669"/>
    <property type="project" value="UniProtKB-SubCell"/>
</dbReference>
<dbReference type="GO" id="GO:0004139">
    <property type="term" value="F:deoxyribose-phosphate aldolase activity"/>
    <property type="evidence" value="ECO:0007669"/>
    <property type="project" value="UniProtKB-UniRule"/>
</dbReference>
<dbReference type="GO" id="GO:0006018">
    <property type="term" value="P:2-deoxyribose 1-phosphate catabolic process"/>
    <property type="evidence" value="ECO:0007669"/>
    <property type="project" value="UniProtKB-UniRule"/>
</dbReference>
<dbReference type="GO" id="GO:0016052">
    <property type="term" value="P:carbohydrate catabolic process"/>
    <property type="evidence" value="ECO:0007669"/>
    <property type="project" value="TreeGrafter"/>
</dbReference>
<dbReference type="GO" id="GO:0009264">
    <property type="term" value="P:deoxyribonucleotide catabolic process"/>
    <property type="evidence" value="ECO:0007669"/>
    <property type="project" value="InterPro"/>
</dbReference>
<dbReference type="CDD" id="cd00959">
    <property type="entry name" value="DeoC"/>
    <property type="match status" value="1"/>
</dbReference>
<dbReference type="FunFam" id="3.20.20.70:FF:000034">
    <property type="entry name" value="Deoxyribose-phosphate aldolase"/>
    <property type="match status" value="1"/>
</dbReference>
<dbReference type="Gene3D" id="3.20.20.70">
    <property type="entry name" value="Aldolase class I"/>
    <property type="match status" value="1"/>
</dbReference>
<dbReference type="HAMAP" id="MF_00592">
    <property type="entry name" value="DeoC_type2"/>
    <property type="match status" value="1"/>
</dbReference>
<dbReference type="InterPro" id="IPR013785">
    <property type="entry name" value="Aldolase_TIM"/>
</dbReference>
<dbReference type="InterPro" id="IPR011343">
    <property type="entry name" value="DeoC"/>
</dbReference>
<dbReference type="InterPro" id="IPR002915">
    <property type="entry name" value="DeoC/FbaB/LacD_aldolase"/>
</dbReference>
<dbReference type="InterPro" id="IPR023649">
    <property type="entry name" value="DeoC_typeII"/>
</dbReference>
<dbReference type="NCBIfam" id="TIGR00126">
    <property type="entry name" value="deoC"/>
    <property type="match status" value="1"/>
</dbReference>
<dbReference type="PANTHER" id="PTHR10889">
    <property type="entry name" value="DEOXYRIBOSE-PHOSPHATE ALDOLASE"/>
    <property type="match status" value="1"/>
</dbReference>
<dbReference type="PANTHER" id="PTHR10889:SF3">
    <property type="entry name" value="DEOXYRIBOSE-PHOSPHATE ALDOLASE"/>
    <property type="match status" value="1"/>
</dbReference>
<dbReference type="Pfam" id="PF01791">
    <property type="entry name" value="DeoC"/>
    <property type="match status" value="1"/>
</dbReference>
<dbReference type="PIRSF" id="PIRSF001357">
    <property type="entry name" value="DeoC"/>
    <property type="match status" value="1"/>
</dbReference>
<dbReference type="SMART" id="SM01133">
    <property type="entry name" value="DeoC"/>
    <property type="match status" value="1"/>
</dbReference>
<dbReference type="SUPFAM" id="SSF51569">
    <property type="entry name" value="Aldolase"/>
    <property type="match status" value="1"/>
</dbReference>
<organism>
    <name type="scientific">Edwardsiella ictaluri (strain 93-146)</name>
    <dbReference type="NCBI Taxonomy" id="634503"/>
    <lineage>
        <taxon>Bacteria</taxon>
        <taxon>Pseudomonadati</taxon>
        <taxon>Pseudomonadota</taxon>
        <taxon>Gammaproteobacteria</taxon>
        <taxon>Enterobacterales</taxon>
        <taxon>Hafniaceae</taxon>
        <taxon>Edwardsiella</taxon>
    </lineage>
</organism>
<evidence type="ECO:0000255" key="1">
    <source>
        <dbReference type="HAMAP-Rule" id="MF_00592"/>
    </source>
</evidence>
<gene>
    <name evidence="1" type="primary">deoC</name>
    <name type="ordered locus">NT01EI_0562</name>
</gene>
<comment type="function">
    <text evidence="1">Catalyzes a reversible aldol reaction between acetaldehyde and D-glyceraldehyde 3-phosphate to generate 2-deoxy-D-ribose 5-phosphate.</text>
</comment>
<comment type="catalytic activity">
    <reaction evidence="1">
        <text>2-deoxy-D-ribose 5-phosphate = D-glyceraldehyde 3-phosphate + acetaldehyde</text>
        <dbReference type="Rhea" id="RHEA:12821"/>
        <dbReference type="ChEBI" id="CHEBI:15343"/>
        <dbReference type="ChEBI" id="CHEBI:59776"/>
        <dbReference type="ChEBI" id="CHEBI:62877"/>
        <dbReference type="EC" id="4.1.2.4"/>
    </reaction>
</comment>
<comment type="pathway">
    <text evidence="1">Carbohydrate degradation; 2-deoxy-D-ribose 1-phosphate degradation; D-glyceraldehyde 3-phosphate and acetaldehyde from 2-deoxy-alpha-D-ribose 1-phosphate: step 2/2.</text>
</comment>
<comment type="subcellular location">
    <subcellularLocation>
        <location evidence="1">Cytoplasm</location>
    </subcellularLocation>
</comment>
<comment type="similarity">
    <text evidence="1">Belongs to the DeoC/FbaB aldolase family. DeoC type 2 subfamily.</text>
</comment>
<protein>
    <recommendedName>
        <fullName evidence="1">Deoxyribose-phosphate aldolase</fullName>
        <shortName evidence="1">DERA</shortName>
        <ecNumber evidence="1">4.1.2.4</ecNumber>
    </recommendedName>
    <alternativeName>
        <fullName evidence="1">2-deoxy-D-ribose 5-phosphate aldolase</fullName>
    </alternativeName>
    <alternativeName>
        <fullName evidence="1">Phosphodeoxyriboaldolase</fullName>
        <shortName evidence="1">Deoxyriboaldolase</shortName>
    </alternativeName>
</protein>
<reference key="1">
    <citation type="submission" date="2009-03" db="EMBL/GenBank/DDBJ databases">
        <title>Complete genome sequence of Edwardsiella ictaluri 93-146.</title>
        <authorList>
            <person name="Williams M.L."/>
            <person name="Gillaspy A.F."/>
            <person name="Dyer D.W."/>
            <person name="Thune R.L."/>
            <person name="Waldbieser G.C."/>
            <person name="Schuster S.C."/>
            <person name="Gipson J."/>
            <person name="Zaitshik J."/>
            <person name="Landry C."/>
            <person name="Lawrence M.L."/>
        </authorList>
    </citation>
    <scope>NUCLEOTIDE SEQUENCE [LARGE SCALE GENOMIC DNA]</scope>
    <source>
        <strain>93-146</strain>
    </source>
</reference>
<proteinExistence type="inferred from homology"/>
<sequence>MTELQIAAQRALRLMDLTTLNDNDTDEKVIALCHQAKSPAGDTAAVCIYPRFIPIARKTLREQGTPDVRIATVTNFPHGNDDIEIALVETRAAIAYGADEVDVVFPYRALMAGNEQVGFDLVKACKEACAAANVLLKVIIETGELKDAALIRKASEISIKAGADFIKTSTGKVPVNATLESAELMMSVIRDMGVAKRVGFKPAGGVRTAEDAAQYLALADRLLGEGWADSRHFRFGASSLLASLLQTLGYDAKGTGSSY</sequence>
<accession>C5BHJ2</accession>
<keyword id="KW-0963">Cytoplasm</keyword>
<keyword id="KW-0456">Lyase</keyword>
<keyword id="KW-0704">Schiff base</keyword>